<reference key="1">
    <citation type="journal article" date="2005" name="Nucleic Acids Res.">
        <title>Genome dynamics and diversity of Shigella species, the etiologic agents of bacillary dysentery.</title>
        <authorList>
            <person name="Yang F."/>
            <person name="Yang J."/>
            <person name="Zhang X."/>
            <person name="Chen L."/>
            <person name="Jiang Y."/>
            <person name="Yan Y."/>
            <person name="Tang X."/>
            <person name="Wang J."/>
            <person name="Xiong Z."/>
            <person name="Dong J."/>
            <person name="Xue Y."/>
            <person name="Zhu Y."/>
            <person name="Xu X."/>
            <person name="Sun L."/>
            <person name="Chen S."/>
            <person name="Nie H."/>
            <person name="Peng J."/>
            <person name="Xu J."/>
            <person name="Wang Y."/>
            <person name="Yuan Z."/>
            <person name="Wen Y."/>
            <person name="Yao Z."/>
            <person name="Shen Y."/>
            <person name="Qiang B."/>
            <person name="Hou Y."/>
            <person name="Yu J."/>
            <person name="Jin Q."/>
        </authorList>
    </citation>
    <scope>NUCLEOTIDE SEQUENCE [LARGE SCALE GENOMIC DNA]</scope>
    <source>
        <strain>Sd197</strain>
    </source>
</reference>
<gene>
    <name evidence="1" type="primary">rlmN</name>
    <name type="ordered locus">SDY_2713</name>
</gene>
<protein>
    <recommendedName>
        <fullName evidence="1">Dual-specificity RNA methyltransferase RlmN</fullName>
        <ecNumber evidence="1">2.1.1.192</ecNumber>
    </recommendedName>
    <alternativeName>
        <fullName evidence="1">23S rRNA (adenine(2503)-C(2))-methyltransferase</fullName>
    </alternativeName>
    <alternativeName>
        <fullName evidence="1">23S rRNA m2A2503 methyltransferase</fullName>
    </alternativeName>
    <alternativeName>
        <fullName evidence="1">Ribosomal RNA large subunit methyltransferase N</fullName>
    </alternativeName>
    <alternativeName>
        <fullName evidence="1">tRNA (adenine(37)-C(2))-methyltransferase</fullName>
    </alternativeName>
    <alternativeName>
        <fullName evidence="1">tRNA m2A37 methyltransferase</fullName>
    </alternativeName>
</protein>
<comment type="function">
    <text evidence="1">Specifically methylates position 2 of adenine 2503 in 23S rRNA and position 2 of adenine 37 in tRNAs. m2A2503 modification seems to play a crucial role in the proofreading step occurring at the peptidyl transferase center and thus would serve to optimize ribosomal fidelity.</text>
</comment>
<comment type="catalytic activity">
    <reaction evidence="1">
        <text>adenosine(2503) in 23S rRNA + 2 reduced [2Fe-2S]-[ferredoxin] + 2 S-adenosyl-L-methionine = 2-methyladenosine(2503) in 23S rRNA + 5'-deoxyadenosine + L-methionine + 2 oxidized [2Fe-2S]-[ferredoxin] + S-adenosyl-L-homocysteine</text>
        <dbReference type="Rhea" id="RHEA:42916"/>
        <dbReference type="Rhea" id="RHEA-COMP:10000"/>
        <dbReference type="Rhea" id="RHEA-COMP:10001"/>
        <dbReference type="Rhea" id="RHEA-COMP:10152"/>
        <dbReference type="Rhea" id="RHEA-COMP:10282"/>
        <dbReference type="ChEBI" id="CHEBI:17319"/>
        <dbReference type="ChEBI" id="CHEBI:33737"/>
        <dbReference type="ChEBI" id="CHEBI:33738"/>
        <dbReference type="ChEBI" id="CHEBI:57844"/>
        <dbReference type="ChEBI" id="CHEBI:57856"/>
        <dbReference type="ChEBI" id="CHEBI:59789"/>
        <dbReference type="ChEBI" id="CHEBI:74411"/>
        <dbReference type="ChEBI" id="CHEBI:74497"/>
        <dbReference type="EC" id="2.1.1.192"/>
    </reaction>
</comment>
<comment type="catalytic activity">
    <reaction evidence="1">
        <text>adenosine(37) in tRNA + 2 reduced [2Fe-2S]-[ferredoxin] + 2 S-adenosyl-L-methionine = 2-methyladenosine(37) in tRNA + 5'-deoxyadenosine + L-methionine + 2 oxidized [2Fe-2S]-[ferredoxin] + S-adenosyl-L-homocysteine</text>
        <dbReference type="Rhea" id="RHEA:43332"/>
        <dbReference type="Rhea" id="RHEA-COMP:10000"/>
        <dbReference type="Rhea" id="RHEA-COMP:10001"/>
        <dbReference type="Rhea" id="RHEA-COMP:10162"/>
        <dbReference type="Rhea" id="RHEA-COMP:10485"/>
        <dbReference type="ChEBI" id="CHEBI:17319"/>
        <dbReference type="ChEBI" id="CHEBI:33737"/>
        <dbReference type="ChEBI" id="CHEBI:33738"/>
        <dbReference type="ChEBI" id="CHEBI:57844"/>
        <dbReference type="ChEBI" id="CHEBI:57856"/>
        <dbReference type="ChEBI" id="CHEBI:59789"/>
        <dbReference type="ChEBI" id="CHEBI:74411"/>
        <dbReference type="ChEBI" id="CHEBI:74497"/>
        <dbReference type="EC" id="2.1.1.192"/>
    </reaction>
</comment>
<comment type="cofactor">
    <cofactor evidence="1">
        <name>[4Fe-4S] cluster</name>
        <dbReference type="ChEBI" id="CHEBI:49883"/>
    </cofactor>
    <text evidence="1">Binds 1 [4Fe-4S] cluster. The cluster is coordinated with 3 cysteines and an exchangeable S-adenosyl-L-methionine.</text>
</comment>
<comment type="subcellular location">
    <subcellularLocation>
        <location evidence="1">Cytoplasm</location>
    </subcellularLocation>
</comment>
<comment type="miscellaneous">
    <text evidence="1">Reaction proceeds by a ping-pong mechanism involving intermediate methylation of a conserved cysteine residue.</text>
</comment>
<comment type="similarity">
    <text evidence="1">Belongs to the radical SAM superfamily. RlmN family.</text>
</comment>
<proteinExistence type="inferred from homology"/>
<sequence>MSEQLVTPENVTTKDGKINLLDLNRQQMREFFKDLGEKPFRADQVMKWMYHYCCDNFDEMTDINKVLRGKLKEVAEIRAPEVVEEQRSSDGTIKWAIAVGDQRVETVYIPEDDRATLCVSSQVGCALECKFCSTAQQGFNRNLRVSEIIGQVWRAAKIVGAAKVTGQRPITNVVMMGMGEPLLNLNNVVPAMEIMLDDFGFGLSKRRVTLSTSGVVPALDKLGDMIDVALAISLHAPNDEIRDEIVPINKKYNIETFLAAVRRYLEKSNANQGRVTIEYVMLDHVNDGTEHAHQLAELLKDTPCKINLIPWNPFPGAPYGRSSNSRIDRFSKVLMSYGFTTIVRKTRGDDIDAACGQLAGDVIDRTKRTLRKRMQGEAIDIKAV</sequence>
<dbReference type="EC" id="2.1.1.192" evidence="1"/>
<dbReference type="EMBL" id="CP000034">
    <property type="protein sequence ID" value="ABB62760.1"/>
    <property type="molecule type" value="Genomic_DNA"/>
</dbReference>
<dbReference type="RefSeq" id="WP_000003317.1">
    <property type="nucleotide sequence ID" value="NC_007606.1"/>
</dbReference>
<dbReference type="RefSeq" id="YP_404251.1">
    <property type="nucleotide sequence ID" value="NC_007606.1"/>
</dbReference>
<dbReference type="SMR" id="Q32D45"/>
<dbReference type="STRING" id="300267.SDY_2713"/>
<dbReference type="EnsemblBacteria" id="ABB62760">
    <property type="protein sequence ID" value="ABB62760"/>
    <property type="gene ID" value="SDY_2713"/>
</dbReference>
<dbReference type="KEGG" id="sdy:SDY_2713"/>
<dbReference type="PATRIC" id="fig|300267.13.peg.3271"/>
<dbReference type="HOGENOM" id="CLU_029101_0_0_6"/>
<dbReference type="Proteomes" id="UP000002716">
    <property type="component" value="Chromosome"/>
</dbReference>
<dbReference type="GO" id="GO:0005737">
    <property type="term" value="C:cytoplasm"/>
    <property type="evidence" value="ECO:0007669"/>
    <property type="project" value="UniProtKB-SubCell"/>
</dbReference>
<dbReference type="GO" id="GO:0051539">
    <property type="term" value="F:4 iron, 4 sulfur cluster binding"/>
    <property type="evidence" value="ECO:0007669"/>
    <property type="project" value="UniProtKB-UniRule"/>
</dbReference>
<dbReference type="GO" id="GO:0046872">
    <property type="term" value="F:metal ion binding"/>
    <property type="evidence" value="ECO:0007669"/>
    <property type="project" value="UniProtKB-KW"/>
</dbReference>
<dbReference type="GO" id="GO:0070040">
    <property type="term" value="F:rRNA (adenine(2503)-C2-)-methyltransferase activity"/>
    <property type="evidence" value="ECO:0007669"/>
    <property type="project" value="UniProtKB-UniRule"/>
</dbReference>
<dbReference type="GO" id="GO:0019843">
    <property type="term" value="F:rRNA binding"/>
    <property type="evidence" value="ECO:0007669"/>
    <property type="project" value="UniProtKB-UniRule"/>
</dbReference>
<dbReference type="GO" id="GO:0002935">
    <property type="term" value="F:tRNA (adenine(37)-C2)-methyltransferase activity"/>
    <property type="evidence" value="ECO:0007669"/>
    <property type="project" value="UniProtKB-UniRule"/>
</dbReference>
<dbReference type="GO" id="GO:0000049">
    <property type="term" value="F:tRNA binding"/>
    <property type="evidence" value="ECO:0007669"/>
    <property type="project" value="UniProtKB-UniRule"/>
</dbReference>
<dbReference type="GO" id="GO:0070475">
    <property type="term" value="P:rRNA base methylation"/>
    <property type="evidence" value="ECO:0007669"/>
    <property type="project" value="UniProtKB-UniRule"/>
</dbReference>
<dbReference type="GO" id="GO:0030488">
    <property type="term" value="P:tRNA methylation"/>
    <property type="evidence" value="ECO:0007669"/>
    <property type="project" value="UniProtKB-UniRule"/>
</dbReference>
<dbReference type="CDD" id="cd01335">
    <property type="entry name" value="Radical_SAM"/>
    <property type="match status" value="1"/>
</dbReference>
<dbReference type="FunFam" id="1.10.150.530:FF:000001">
    <property type="entry name" value="Dual-specificity RNA methyltransferase RlmN"/>
    <property type="match status" value="1"/>
</dbReference>
<dbReference type="FunFam" id="3.20.20.70:FF:000008">
    <property type="entry name" value="Dual-specificity RNA methyltransferase RlmN"/>
    <property type="match status" value="1"/>
</dbReference>
<dbReference type="Gene3D" id="1.10.150.530">
    <property type="match status" value="1"/>
</dbReference>
<dbReference type="Gene3D" id="3.20.20.70">
    <property type="entry name" value="Aldolase class I"/>
    <property type="match status" value="1"/>
</dbReference>
<dbReference type="HAMAP" id="MF_01849">
    <property type="entry name" value="RNA_methyltr_RlmN"/>
    <property type="match status" value="1"/>
</dbReference>
<dbReference type="InterPro" id="IPR013785">
    <property type="entry name" value="Aldolase_TIM"/>
</dbReference>
<dbReference type="InterPro" id="IPR040072">
    <property type="entry name" value="Methyltransferase_A"/>
</dbReference>
<dbReference type="InterPro" id="IPR048641">
    <property type="entry name" value="RlmN_N"/>
</dbReference>
<dbReference type="InterPro" id="IPR027492">
    <property type="entry name" value="RNA_MTrfase_RlmN"/>
</dbReference>
<dbReference type="InterPro" id="IPR004383">
    <property type="entry name" value="rRNA_lsu_MTrfase_RlmN/Cfr"/>
</dbReference>
<dbReference type="InterPro" id="IPR007197">
    <property type="entry name" value="rSAM"/>
</dbReference>
<dbReference type="NCBIfam" id="NF008396">
    <property type="entry name" value="PRK11194.1"/>
    <property type="match status" value="1"/>
</dbReference>
<dbReference type="NCBIfam" id="TIGR00048">
    <property type="entry name" value="rRNA_mod_RlmN"/>
    <property type="match status" value="1"/>
</dbReference>
<dbReference type="PANTHER" id="PTHR30544">
    <property type="entry name" value="23S RRNA METHYLTRANSFERASE"/>
    <property type="match status" value="1"/>
</dbReference>
<dbReference type="PANTHER" id="PTHR30544:SF5">
    <property type="entry name" value="RADICAL SAM CORE DOMAIN-CONTAINING PROTEIN"/>
    <property type="match status" value="1"/>
</dbReference>
<dbReference type="Pfam" id="PF04055">
    <property type="entry name" value="Radical_SAM"/>
    <property type="match status" value="1"/>
</dbReference>
<dbReference type="Pfam" id="PF21016">
    <property type="entry name" value="RlmN_N"/>
    <property type="match status" value="1"/>
</dbReference>
<dbReference type="PIRSF" id="PIRSF006004">
    <property type="entry name" value="CHP00048"/>
    <property type="match status" value="1"/>
</dbReference>
<dbReference type="SFLD" id="SFLDF00275">
    <property type="entry name" value="adenosine_C2_methyltransferase"/>
    <property type="match status" value="1"/>
</dbReference>
<dbReference type="SFLD" id="SFLDG01062">
    <property type="entry name" value="methyltransferase_(Class_A)"/>
    <property type="match status" value="1"/>
</dbReference>
<dbReference type="SUPFAM" id="SSF102114">
    <property type="entry name" value="Radical SAM enzymes"/>
    <property type="match status" value="1"/>
</dbReference>
<dbReference type="PROSITE" id="PS51918">
    <property type="entry name" value="RADICAL_SAM"/>
    <property type="match status" value="1"/>
</dbReference>
<accession>Q32D45</accession>
<name>RLMN_SHIDS</name>
<organism>
    <name type="scientific">Shigella dysenteriae serotype 1 (strain Sd197)</name>
    <dbReference type="NCBI Taxonomy" id="300267"/>
    <lineage>
        <taxon>Bacteria</taxon>
        <taxon>Pseudomonadati</taxon>
        <taxon>Pseudomonadota</taxon>
        <taxon>Gammaproteobacteria</taxon>
        <taxon>Enterobacterales</taxon>
        <taxon>Enterobacteriaceae</taxon>
        <taxon>Shigella</taxon>
    </lineage>
</organism>
<feature type="chain" id="PRO_0000350411" description="Dual-specificity RNA methyltransferase RlmN">
    <location>
        <begin position="1"/>
        <end position="384"/>
    </location>
</feature>
<feature type="domain" description="Radical SAM core" evidence="2">
    <location>
        <begin position="111"/>
        <end position="350"/>
    </location>
</feature>
<feature type="active site" description="Proton acceptor" evidence="1">
    <location>
        <position position="105"/>
    </location>
</feature>
<feature type="active site" description="S-methylcysteine intermediate" evidence="1">
    <location>
        <position position="355"/>
    </location>
</feature>
<feature type="binding site" evidence="1">
    <location>
        <position position="125"/>
    </location>
    <ligand>
        <name>[4Fe-4S] cluster</name>
        <dbReference type="ChEBI" id="CHEBI:49883"/>
        <note>4Fe-4S-S-AdoMet</note>
    </ligand>
</feature>
<feature type="binding site" evidence="1">
    <location>
        <position position="129"/>
    </location>
    <ligand>
        <name>[4Fe-4S] cluster</name>
        <dbReference type="ChEBI" id="CHEBI:49883"/>
        <note>4Fe-4S-S-AdoMet</note>
    </ligand>
</feature>
<feature type="binding site" evidence="1">
    <location>
        <position position="132"/>
    </location>
    <ligand>
        <name>[4Fe-4S] cluster</name>
        <dbReference type="ChEBI" id="CHEBI:49883"/>
        <note>4Fe-4S-S-AdoMet</note>
    </ligand>
</feature>
<feature type="binding site" evidence="1">
    <location>
        <begin position="179"/>
        <end position="180"/>
    </location>
    <ligand>
        <name>S-adenosyl-L-methionine</name>
        <dbReference type="ChEBI" id="CHEBI:59789"/>
    </ligand>
</feature>
<feature type="binding site" evidence="1">
    <location>
        <position position="211"/>
    </location>
    <ligand>
        <name>S-adenosyl-L-methionine</name>
        <dbReference type="ChEBI" id="CHEBI:59789"/>
    </ligand>
</feature>
<feature type="binding site" evidence="1">
    <location>
        <begin position="233"/>
        <end position="235"/>
    </location>
    <ligand>
        <name>S-adenosyl-L-methionine</name>
        <dbReference type="ChEBI" id="CHEBI:59789"/>
    </ligand>
</feature>
<feature type="binding site" evidence="1">
    <location>
        <position position="312"/>
    </location>
    <ligand>
        <name>S-adenosyl-L-methionine</name>
        <dbReference type="ChEBI" id="CHEBI:59789"/>
    </ligand>
</feature>
<feature type="disulfide bond" description="(transient)" evidence="1">
    <location>
        <begin position="118"/>
        <end position="355"/>
    </location>
</feature>
<keyword id="KW-0004">4Fe-4S</keyword>
<keyword id="KW-0963">Cytoplasm</keyword>
<keyword id="KW-1015">Disulfide bond</keyword>
<keyword id="KW-0408">Iron</keyword>
<keyword id="KW-0411">Iron-sulfur</keyword>
<keyword id="KW-0479">Metal-binding</keyword>
<keyword id="KW-0489">Methyltransferase</keyword>
<keyword id="KW-1185">Reference proteome</keyword>
<keyword id="KW-0698">rRNA processing</keyword>
<keyword id="KW-0949">S-adenosyl-L-methionine</keyword>
<keyword id="KW-0808">Transferase</keyword>
<keyword id="KW-0819">tRNA processing</keyword>
<evidence type="ECO:0000255" key="1">
    <source>
        <dbReference type="HAMAP-Rule" id="MF_01849"/>
    </source>
</evidence>
<evidence type="ECO:0000255" key="2">
    <source>
        <dbReference type="PROSITE-ProRule" id="PRU01266"/>
    </source>
</evidence>